<reference key="1">
    <citation type="journal article" date="2007" name="Science">
        <title>The Fusarium graminearum genome reveals a link between localized polymorphism and pathogen specialization.</title>
        <authorList>
            <person name="Cuomo C.A."/>
            <person name="Gueldener U."/>
            <person name="Xu J.-R."/>
            <person name="Trail F."/>
            <person name="Turgeon B.G."/>
            <person name="Di Pietro A."/>
            <person name="Walton J.D."/>
            <person name="Ma L.-J."/>
            <person name="Baker S.E."/>
            <person name="Rep M."/>
            <person name="Adam G."/>
            <person name="Antoniw J."/>
            <person name="Baldwin T."/>
            <person name="Calvo S.E."/>
            <person name="Chang Y.-L."/>
            <person name="DeCaprio D."/>
            <person name="Gale L.R."/>
            <person name="Gnerre S."/>
            <person name="Goswami R.S."/>
            <person name="Hammond-Kosack K."/>
            <person name="Harris L.J."/>
            <person name="Hilburn K."/>
            <person name="Kennell J.C."/>
            <person name="Kroken S."/>
            <person name="Magnuson J.K."/>
            <person name="Mannhaupt G."/>
            <person name="Mauceli E.W."/>
            <person name="Mewes H.-W."/>
            <person name="Mitterbauer R."/>
            <person name="Muehlbauer G."/>
            <person name="Muensterkoetter M."/>
            <person name="Nelson D."/>
            <person name="O'Donnell K."/>
            <person name="Ouellet T."/>
            <person name="Qi W."/>
            <person name="Quesneville H."/>
            <person name="Roncero M.I.G."/>
            <person name="Seong K.-Y."/>
            <person name="Tetko I.V."/>
            <person name="Urban M."/>
            <person name="Waalwijk C."/>
            <person name="Ward T.J."/>
            <person name="Yao J."/>
            <person name="Birren B.W."/>
            <person name="Kistler H.C."/>
        </authorList>
    </citation>
    <scope>NUCLEOTIDE SEQUENCE [LARGE SCALE GENOMIC DNA]</scope>
    <source>
        <strain>ATCC MYA-4620 / CBS 123657 / FGSC 9075 / NRRL 31084 / PH-1</strain>
    </source>
</reference>
<reference key="2">
    <citation type="journal article" date="2010" name="Nature">
        <title>Comparative genomics reveals mobile pathogenicity chromosomes in Fusarium.</title>
        <authorList>
            <person name="Ma L.-J."/>
            <person name="van der Does H.C."/>
            <person name="Borkovich K.A."/>
            <person name="Coleman J.J."/>
            <person name="Daboussi M.-J."/>
            <person name="Di Pietro A."/>
            <person name="Dufresne M."/>
            <person name="Freitag M."/>
            <person name="Grabherr M."/>
            <person name="Henrissat B."/>
            <person name="Houterman P.M."/>
            <person name="Kang S."/>
            <person name="Shim W.-B."/>
            <person name="Woloshuk C."/>
            <person name="Xie X."/>
            <person name="Xu J.-R."/>
            <person name="Antoniw J."/>
            <person name="Baker S.E."/>
            <person name="Bluhm B.H."/>
            <person name="Breakspear A."/>
            <person name="Brown D.W."/>
            <person name="Butchko R.A.E."/>
            <person name="Chapman S."/>
            <person name="Coulson R."/>
            <person name="Coutinho P.M."/>
            <person name="Danchin E.G.J."/>
            <person name="Diener A."/>
            <person name="Gale L.R."/>
            <person name="Gardiner D.M."/>
            <person name="Goff S."/>
            <person name="Hammond-Kosack K.E."/>
            <person name="Hilburn K."/>
            <person name="Hua-Van A."/>
            <person name="Jonkers W."/>
            <person name="Kazan K."/>
            <person name="Kodira C.D."/>
            <person name="Koehrsen M."/>
            <person name="Kumar L."/>
            <person name="Lee Y.-H."/>
            <person name="Li L."/>
            <person name="Manners J.M."/>
            <person name="Miranda-Saavedra D."/>
            <person name="Mukherjee M."/>
            <person name="Park G."/>
            <person name="Park J."/>
            <person name="Park S.-Y."/>
            <person name="Proctor R.H."/>
            <person name="Regev A."/>
            <person name="Ruiz-Roldan M.C."/>
            <person name="Sain D."/>
            <person name="Sakthikumar S."/>
            <person name="Sykes S."/>
            <person name="Schwartz D.C."/>
            <person name="Turgeon B.G."/>
            <person name="Wapinski I."/>
            <person name="Yoder O."/>
            <person name="Young S."/>
            <person name="Zeng Q."/>
            <person name="Zhou S."/>
            <person name="Galagan J."/>
            <person name="Cuomo C.A."/>
            <person name="Kistler H.C."/>
            <person name="Rep M."/>
        </authorList>
    </citation>
    <scope>GENOME REANNOTATION</scope>
    <source>
        <strain>ATCC MYA-4620 / CBS 123657 / FGSC 9075 / NRRL 31084 / PH-1</strain>
    </source>
</reference>
<reference key="3">
    <citation type="journal article" date="2015" name="BMC Genomics">
        <title>The completed genome sequence of the pathogenic ascomycete fungus Fusarium graminearum.</title>
        <authorList>
            <person name="King R."/>
            <person name="Urban M."/>
            <person name="Hammond-Kosack M.C.U."/>
            <person name="Hassani-Pak K."/>
            <person name="Hammond-Kosack K.E."/>
        </authorList>
    </citation>
    <scope>NUCLEOTIDE SEQUENCE [LARGE SCALE GENOMIC DNA]</scope>
    <source>
        <strain>ATCC MYA-4620 / CBS 123657 / FGSC 9075 / NRRL 31084 / PH-1</strain>
    </source>
</reference>
<reference key="4">
    <citation type="journal article" date="2011" name="Microbiology">
        <title>A sterol C-14 reductase encoded by FgERG24B is responsible for the intrinsic resistance of Fusarium graminearum to amine fungicides.</title>
        <authorList>
            <person name="Liu X."/>
            <person name="Fu J."/>
            <person name="Yun Y."/>
            <person name="Yin Y."/>
            <person name="Ma Z."/>
        </authorList>
    </citation>
    <scope>FUNCTION</scope>
    <scope>DISRUPTION PHENOTYPE</scope>
</reference>
<reference key="5">
    <citation type="journal article" date="2013" name="Mol. Plant Pathol.">
        <title>Involvement of FgERG4 in ergosterol biosynthesis, vegetative differentiation and virulence in Fusarium graminearum.</title>
        <authorList>
            <person name="Liu X."/>
            <person name="Jiang J."/>
            <person name="Yin Y."/>
            <person name="Ma Z."/>
        </authorList>
    </citation>
    <scope>INDUCTION</scope>
</reference>
<reference key="6">
    <citation type="journal article" date="2013" name="New Phytol.">
        <title>Characterization of the sterol 14alpha-demethylases of Fusarium graminearum identifies a novel genus-specific CYP51 function.</title>
        <authorList>
            <person name="Fan J."/>
            <person name="Urban M."/>
            <person name="Parker J.E."/>
            <person name="Brewer H.C."/>
            <person name="Kelly S.L."/>
            <person name="Hammond-Kosack K.E."/>
            <person name="Fraaije B.A."/>
            <person name="Liu X."/>
            <person name="Cools H.J."/>
        </authorList>
    </citation>
    <scope>FUNCTION</scope>
    <scope>PATHWAY</scope>
</reference>
<accession>I1RF79</accession>
<keyword id="KW-0256">Endoplasmic reticulum</keyword>
<keyword id="KW-0444">Lipid biosynthesis</keyword>
<keyword id="KW-0443">Lipid metabolism</keyword>
<keyword id="KW-0472">Membrane</keyword>
<keyword id="KW-0560">Oxidoreductase</keyword>
<keyword id="KW-1185">Reference proteome</keyword>
<keyword id="KW-0752">Steroid biosynthesis</keyword>
<keyword id="KW-0753">Steroid metabolism</keyword>
<keyword id="KW-0756">Sterol biosynthesis</keyword>
<keyword id="KW-1207">Sterol metabolism</keyword>
<keyword id="KW-0812">Transmembrane</keyword>
<keyword id="KW-1133">Transmembrane helix</keyword>
<name>ER24B_GIBZE</name>
<dbReference type="EC" id="1.3.1.70" evidence="8"/>
<dbReference type="EMBL" id="HG970332">
    <property type="protein sequence ID" value="CEF74623.1"/>
    <property type="molecule type" value="Genomic_DNA"/>
</dbReference>
<dbReference type="RefSeq" id="XP_011318254.1">
    <property type="nucleotide sequence ID" value="XM_011319952.1"/>
</dbReference>
<dbReference type="SMR" id="I1RF79"/>
<dbReference type="FunCoup" id="I1RF79">
    <property type="interactions" value="498"/>
</dbReference>
<dbReference type="STRING" id="229533.I1RF79"/>
<dbReference type="KEGG" id="fgr:FGSG_02346"/>
<dbReference type="VEuPathDB" id="FungiDB:FGRAMPH1_01G05637"/>
<dbReference type="eggNOG" id="KOG1435">
    <property type="taxonomic scope" value="Eukaryota"/>
</dbReference>
<dbReference type="HOGENOM" id="CLU_015631_0_3_1"/>
<dbReference type="InParanoid" id="I1RF79"/>
<dbReference type="OrthoDB" id="11888at110618"/>
<dbReference type="UniPathway" id="UPA00768"/>
<dbReference type="Proteomes" id="UP000070720">
    <property type="component" value="Chromosome 1"/>
</dbReference>
<dbReference type="GO" id="GO:0005789">
    <property type="term" value="C:endoplasmic reticulum membrane"/>
    <property type="evidence" value="ECO:0007669"/>
    <property type="project" value="UniProtKB-SubCell"/>
</dbReference>
<dbReference type="GO" id="GO:0050613">
    <property type="term" value="F:Delta14-sterol reductase activity"/>
    <property type="evidence" value="ECO:0007669"/>
    <property type="project" value="UniProtKB-ARBA"/>
</dbReference>
<dbReference type="GO" id="GO:0006696">
    <property type="term" value="P:ergosterol biosynthetic process"/>
    <property type="evidence" value="ECO:0007669"/>
    <property type="project" value="TreeGrafter"/>
</dbReference>
<dbReference type="Gene3D" id="1.20.120.1630">
    <property type="match status" value="1"/>
</dbReference>
<dbReference type="InterPro" id="IPR001171">
    <property type="entry name" value="ERG24_DHCR-like"/>
</dbReference>
<dbReference type="InterPro" id="IPR018083">
    <property type="entry name" value="Sterol_reductase_CS"/>
</dbReference>
<dbReference type="PANTHER" id="PTHR21257">
    <property type="entry name" value="DELTA(14)-STEROL REDUCTASE"/>
    <property type="match status" value="1"/>
</dbReference>
<dbReference type="PANTHER" id="PTHR21257:SF52">
    <property type="entry name" value="DELTA(14)-STEROL REDUCTASE TM7SF2"/>
    <property type="match status" value="1"/>
</dbReference>
<dbReference type="Pfam" id="PF01222">
    <property type="entry name" value="ERG4_ERG24"/>
    <property type="match status" value="1"/>
</dbReference>
<dbReference type="PROSITE" id="PS01017">
    <property type="entry name" value="STEROL_REDUCT_1"/>
    <property type="match status" value="1"/>
</dbReference>
<dbReference type="PROSITE" id="PS01018">
    <property type="entry name" value="STEROL_REDUCT_2"/>
    <property type="match status" value="1"/>
</dbReference>
<sequence>MKAPDSPRYEFGGPLGATGIVFGLPILMQVLYLGCNDVSGCPAPALLDPKTLSWAKLKSQIPWPQEGLSGFMSWEVTRWLFAYYFLSLMLYRIMPAQIVLGTKLRESGKPLEYRFNSFSATVVQLTGCAIGTYIYGANFPVWTWITDHYIQLLTTSTVLTYIISIWTYLRSFSIKPGNPELREVAVGGRTGRVIYDYFIGRELNPRVTLPFFGEIDIKAWLEMRPGLTGWILLNCSFIAKQYRTYGFVSDSIVVIALIQAYYVLEGQYSEAGLLSMMDITSDGLGFMLTWGDIVWVPFLYSTQCRYLSVYPVHLGPIGVGAIGTVFCIGLYIFRSSNNQKALFRKDPNNPAFANMTYIQTKRGTKLLTGGWWGMARHVNYLGDWIQSLPFCLPTKAAGYVILPAGTAVAGAEVAKMLDGRLVTPGDAAPWGMLFTYLYSAWFGFLLIHRERRDDYACSEKYGKDWEEYKNKVRWRVLPGVY</sequence>
<proteinExistence type="evidence at transcript level"/>
<gene>
    <name evidence="6" type="primary">ERG24B</name>
    <name type="ORF">FG02346</name>
    <name type="ORF">FGRAMPH1_01T05637</name>
</gene>
<organism>
    <name type="scientific">Gibberella zeae (strain ATCC MYA-4620 / CBS 123657 / FGSC 9075 / NRRL 31084 / PH-1)</name>
    <name type="common">Wheat head blight fungus</name>
    <name type="synonym">Fusarium graminearum</name>
    <dbReference type="NCBI Taxonomy" id="229533"/>
    <lineage>
        <taxon>Eukaryota</taxon>
        <taxon>Fungi</taxon>
        <taxon>Dikarya</taxon>
        <taxon>Ascomycota</taxon>
        <taxon>Pezizomycotina</taxon>
        <taxon>Sordariomycetes</taxon>
        <taxon>Hypocreomycetidae</taxon>
        <taxon>Hypocreales</taxon>
        <taxon>Nectriaceae</taxon>
        <taxon>Fusarium</taxon>
    </lineage>
</organism>
<protein>
    <recommendedName>
        <fullName evidence="6">Delta(14)-sterol reductase ERG24B</fullName>
        <ecNumber evidence="8">1.3.1.70</ecNumber>
    </recommendedName>
    <alternativeName>
        <fullName evidence="6">C-14 sterol reductase ERG24B</fullName>
    </alternativeName>
    <alternativeName>
        <fullName evidence="6">Ergosterol biosynthetic protein 24B</fullName>
    </alternativeName>
    <alternativeName>
        <fullName evidence="7">Sterol C14-reductase ERG24B</fullName>
    </alternativeName>
</protein>
<evidence type="ECO:0000250" key="1">
    <source>
        <dbReference type="UniProtKB" id="Q4WKA5"/>
    </source>
</evidence>
<evidence type="ECO:0000255" key="2"/>
<evidence type="ECO:0000269" key="3">
    <source>
    </source>
</evidence>
<evidence type="ECO:0000269" key="4">
    <source>
    </source>
</evidence>
<evidence type="ECO:0000269" key="5">
    <source>
    </source>
</evidence>
<evidence type="ECO:0000303" key="6">
    <source>
    </source>
</evidence>
<evidence type="ECO:0000305" key="7"/>
<evidence type="ECO:0000305" key="8">
    <source>
    </source>
</evidence>
<comment type="function">
    <text evidence="1 3 8">Delta(14)-sterol reductase; part of the third module of ergosterol biosynthesis pathway that includes the late steps of the pathway (PubMed:21436218). Catalyzes the reduction of the C14=C15 double bond within 4,4,24-trimethyl ergosta-8,14,24(28)-trienolto produce 4,4-dimethylfecosterol (By similarity). The third module or late pathway involves the ergosterol synthesis itself through consecutive reactions that mainly occur in the endoplasmic reticulum (ER) membrane. Firstly, the squalene synthase ERG9 catalyzes the condensation of 2 farnesyl pyrophosphate moieties to form squalene, which is the precursor of all steroids. Squalene synthase is crucial for balancing the incorporation of farnesyl diphosphate (FPP) into sterol and nonsterol isoprene synthesis. Secondly, squalene is converted into lanosterol by the consecutive action of the squalene epoxidase ERG1 and the lanosterol synthase ERG7. Then, the delta(24)-sterol C-methyltransferase ERG6 methylates lanosterol at C-24 to produce eburicol. Eburicol is the substrate of the sterol 14-alpha demethylase encoded by CYP51A, CYP51B and CYP51C, to yield 4,4,24-trimethyl ergosta-8,14,24(28)-trienol. CYP51B encodes the enzyme primarily responsible for sterol 14-alpha-demethylation, and plays an essential role in ascospore formation. CYP51A encodes an additional sterol 14-alpha-demethylase, induced on ergosterol depletion and responsible for the intrinsic variation in azole sensitivity. The third CYP51 isoform, CYP51C, does not encode a sterol 14-alpha-demethylase, but is required for full virulence on host wheat ears. The C-14 reductase ERG24 then reduces the C14=C15 double bond which leads to 4,4-dimethylfecosterol. A sequence of further demethylations at C-4, involving the C-4 demethylation complex containing the C-4 methylsterol oxidases ERG25, the sterol-4-alpha-carboxylate 3-dehydrogenase ERG26 and the 3-keto-steroid reductase ERG27, leads to the production of fecosterol via 4-methylfecosterol. ERG28 has a role as a scaffold to help anchor ERG25, ERG26 and ERG27 to the endoplasmic reticulum. The C-8 sterol isomerase ERG2 then catalyzes the reaction which results in unsaturation at C-7 in the B ring of sterols and thus converts fecosterol to episterol. The sterol-C5-desaturases ERG3A and ERG3BB then catalyze the introduction of a C-5 double bond in the B ring to produce 5-dehydroepisterol. The C-22 sterol desaturases ERG5A and ERG5B further convert 5-dehydroepisterol into ergosta-5,7,22,24(28)-tetraen-3beta-ol by forming the C-22(23) double bond in the sterol side chain. Finally, ergosta-5,7,22,24(28)-tetraen-3beta-ol is substrate of the C-24(28) sterol reductase ERG4 to produce ergosterol (Probable).</text>
</comment>
<comment type="catalytic activity">
    <reaction evidence="8">
        <text>4,4-dimethyl-5alpha-cholesta-8,24-dien-3beta-ol + NADP(+) = 4,4-dimethyl-5alpha-cholesta-8,14,24-trien-3beta-ol + NADPH + H(+)</text>
        <dbReference type="Rhea" id="RHEA:18561"/>
        <dbReference type="ChEBI" id="CHEBI:15378"/>
        <dbReference type="ChEBI" id="CHEBI:17813"/>
        <dbReference type="ChEBI" id="CHEBI:18364"/>
        <dbReference type="ChEBI" id="CHEBI:57783"/>
        <dbReference type="ChEBI" id="CHEBI:58349"/>
        <dbReference type="EC" id="1.3.1.70"/>
    </reaction>
</comment>
<comment type="pathway">
    <text evidence="8">Steroid metabolism; ergosterol biosynthesis.</text>
</comment>
<comment type="subcellular location">
    <subcellularLocation>
        <location evidence="7">Endoplasmic reticulum membrane</location>
        <topology evidence="2">Multi-pass membrane protein</topology>
    </subcellularLocation>
</comment>
<comment type="induction">
    <text evidence="4">Expression is increased in the absence of the C-24(28) sterol reductase ERG4.</text>
</comment>
<comment type="disruption phenotype">
    <text evidence="3">Exhibits significantly increased sensitivity to amine fungicides, including tridemorph, fenpropidin and spiroxamine, but not to non-amine fungicides.</text>
</comment>
<comment type="miscellaneous">
    <text evidence="5">In Fusarium, the biosynthesis pathway of the sterol precursors leading to the prevalent sterol ergosterol differs from yeast. The ringsystem of lanosterol in S.cerevisiae is firstly demethylised in three enzymatic steps leading to the intermediate zymosterol and secondly a methyl group is added to zymosterol by the sterol 24-C-methyltransferase to form fecosterol. In Fusarium, lanosterol is firstly transmethylated by the sterol 24-C-methyltransferase leading to the intermediate eburicol and secondly demethylated in three steps to form fecosterol.</text>
</comment>
<comment type="similarity">
    <text evidence="7">Belongs to the ERG4/ERG24 family.</text>
</comment>
<feature type="chain" id="PRO_0000454360" description="Delta(14)-sterol reductase ERG24B">
    <location>
        <begin position="1"/>
        <end position="481"/>
    </location>
</feature>
<feature type="transmembrane region" description="Helical" evidence="2">
    <location>
        <begin position="11"/>
        <end position="31"/>
    </location>
</feature>
<feature type="transmembrane region" description="Helical" evidence="2">
    <location>
        <begin position="80"/>
        <end position="100"/>
    </location>
</feature>
<feature type="transmembrane region" description="Helical" evidence="2">
    <location>
        <begin position="125"/>
        <end position="145"/>
    </location>
</feature>
<feature type="transmembrane region" description="Helical" evidence="2">
    <location>
        <begin position="149"/>
        <end position="169"/>
    </location>
</feature>
<feature type="transmembrane region" description="Helical" evidence="2">
    <location>
        <begin position="244"/>
        <end position="264"/>
    </location>
</feature>
<feature type="transmembrane region" description="Helical" evidence="2">
    <location>
        <begin position="279"/>
        <end position="299"/>
    </location>
</feature>
<feature type="transmembrane region" description="Helical" evidence="2">
    <location>
        <begin position="313"/>
        <end position="333"/>
    </location>
</feature>
<feature type="transmembrane region" description="Helical" evidence="2">
    <location>
        <begin position="427"/>
        <end position="447"/>
    </location>
</feature>